<evidence type="ECO:0000255" key="1"/>
<evidence type="ECO:0000255" key="2">
    <source>
        <dbReference type="PROSITE-ProRule" id="PRU01054"/>
    </source>
</evidence>
<evidence type="ECO:0000269" key="3">
    <source>
    </source>
</evidence>
<evidence type="ECO:0000305" key="4"/>
<feature type="chain" id="PRO_0000324579" description="Interferon-induced very large GTPase 1">
    <location>
        <begin position="1"/>
        <end position="2427"/>
    </location>
</feature>
<feature type="domain" description="VLIG-type G" evidence="2">
    <location>
        <begin position="1485"/>
        <end position="1726"/>
    </location>
</feature>
<feature type="binding site" evidence="1">
    <location>
        <begin position="1495"/>
        <end position="1502"/>
    </location>
    <ligand>
        <name>GTP</name>
        <dbReference type="ChEBI" id="CHEBI:37565"/>
    </ligand>
</feature>
<feature type="binding site" evidence="1">
    <location>
        <begin position="1548"/>
        <end position="1551"/>
    </location>
    <ligand>
        <name>GTP</name>
        <dbReference type="ChEBI" id="CHEBI:37565"/>
    </ligand>
</feature>
<feature type="binding site" evidence="1">
    <location>
        <begin position="1625"/>
        <end position="1628"/>
    </location>
    <ligand>
        <name>GTP</name>
        <dbReference type="ChEBI" id="CHEBI:37565"/>
    </ligand>
</feature>
<feature type="sequence conflict" description="In Ref. 2; BAE32834." evidence="4" ref="2">
    <original>I</original>
    <variation>S</variation>
    <location>
        <position position="602"/>
    </location>
</feature>
<feature type="sequence conflict" description="In Ref. 2; BAE32834." evidence="4" ref="2">
    <original>K</original>
    <variation>R</variation>
    <location>
        <position position="644"/>
    </location>
</feature>
<feature type="sequence conflict" description="In Ref. 2; BAC32832." evidence="4" ref="2">
    <original>I</original>
    <variation>V</variation>
    <location>
        <position position="1858"/>
    </location>
</feature>
<organism>
    <name type="scientific">Mus musculus</name>
    <name type="common">Mouse</name>
    <dbReference type="NCBI Taxonomy" id="10090"/>
    <lineage>
        <taxon>Eukaryota</taxon>
        <taxon>Metazoa</taxon>
        <taxon>Chordata</taxon>
        <taxon>Craniata</taxon>
        <taxon>Vertebrata</taxon>
        <taxon>Euteleostomi</taxon>
        <taxon>Mammalia</taxon>
        <taxon>Eutheria</taxon>
        <taxon>Euarchontoglires</taxon>
        <taxon>Glires</taxon>
        <taxon>Rodentia</taxon>
        <taxon>Myomorpha</taxon>
        <taxon>Muroidea</taxon>
        <taxon>Muridae</taxon>
        <taxon>Murinae</taxon>
        <taxon>Mus</taxon>
        <taxon>Mus</taxon>
    </lineage>
</organism>
<sequence>MATAKCFTDEPQLQSRRKHNLQEMLTEVGLSVDYWLPKLQEDLGVTSAQALQYLDRNDLQKLKSQTTHTWEKRALEKLLDFSQPNSVAELQETPREMKKNRQRQAGQALQALKALQSEGKHREEEAVRRKEAELRQAMEIPEECWPTAEVSLKDITEIMERHLSHMERTLAHSPNLSDGDLVRWASGGLALQGIYKTNHPRSLIQKREELLSVPKQFSLVGPEHGTEIKTMEFSSFHEQAMFTETIKMMGFSSTSLVKGEGWGFSLEAGIDQNEQTASENTHQSHSEQTYFCSARFSYIPLATCHFHINDLELSNAALQELKTIEELLEQTTDHRDGLPLLRHRAENFFHRFGSHANQGPLQLGGIYCWKAISEGFKSEHLADVKQQTRESLNIYIMGSYSGFGVKVGASVNIANSNSETASFSTTHLHSQTKVQLSVAQIGGPAEADGIAQWTAGLVVSNQTWSVIDRELQLVPIWDIILSSHRTDFKNALQVANCLKDNYTALTELDAQIQEGEEFLTARKEAKLFIEDVKCWEVSDPEEQLTKLLDFMQTLSQKIKSYNIWINTCLTDWDLQNFLINTVKFCKTSPTYKTQFIKSQLCILLEPHVYKVTNFPEAHSIIQWINQSEYGEEQVKITSFSEFIKTLKKTHKYLMEVNFKNEAPETVEEAERTATYEVTTALSSFLKYLKETEQPDMQLLLLSIAAGAGYQLVNSIFQHLLGCDELNFLLDQMQSNQHKYQELKNICNYRAQAFLVLTALRTTVEITDISTEEKRQRLALIKQHMGTLLSEEVAHVLTKHGEHHDWESLENDLRLLIEGDYKATTHYLQMDEVKKQLQSLCHGKKQTYKQKSNENITKGMIENGPFLKLLQRLGLDNYYPKRMSRADFHLIYKTSVYNSQPRSEKELPFYFLQKLLMLDYGFRHLIVKDDENIKKQISIGSSNHENEDIDPYDDVIIDNDSPGYPSATESWPHIHPLDIQMTILHCADDLTRQYIFSKLSICHYALPLVVPNPNTSQIEFYLWSLRQIRKSWQDASKSPQDKSYSHRNQQMCRVSTPIVSFIRVGNDLSASKSQIMNSLLSKRKHDVFFHRHCKGSNKHCLLMQGVVEICWFCPAGQGEDTFENCLTFTSLHGDAKEHTQQLSFLQHVSSIIVVLMSVSDNNKENQKLVRHLWQSSTPLICLIDDKEKAIANTSGKRMRIGIKNRNEAELTEELTNAIKHFLELSNTVLSLEDCSQTARELGFIIDEDQRDCKEAKEKAQTVMALLEEYKLSQTKENLLPLQGQLWHLWCKKDKEFYHLREKGNRSIEQHKSEIETHKRKIRRQQLEKAFPLNDLMRSVLELLQDYSETHNKLYVLQWLTLFFDNLTIDHLDKLHERQRSLWLRIQTEKQRAQKSNSVQNQIEAISTEIHNCTLGIEHLLREVGQIYEALEETSSSRDSLFLCLPQIAADLMIAGVPIELMDGDASYVPLKWVAAIFDKITEKVGDKRLFVLSVLGLQSSGKSTLLNALFGLQFTVSAGRCTKGAYMQLLKVEETFTEELGFNYVLVIDTEGLRAPELNNKSQNWDHELATLVIGLGNLTLINIFGENPSDIQDILQISVQAFLRMKQVKISPSCLFVHQNVGEVTAKDQTMEGRKRLEQKLDEMTALAAELEECSNITRFSDVIKFDANRHVYYFAHLWDGNPPMAPPNPRYSYNVQELRNEILSTAQQESRGRILKISDFKFRVQDLWKALVSENFIFSFRNTQEVIAMSKLETKYNEWTWELRSHVLDLQNQLDNQIQNGKILTLTSNLLEEPLSRKLKTIKEEFDKYFEEDPDCEILVQWKANFEHKLLILKDSLISDTRQKCNEHISLKNSQEILDNQKSQYENQLLERSRKLALNLKGKELSDEELHEKFRQLWTSWIYDVSSNVPHVTEPNIDLDSENILLEYFKKDKNIVERLKIKSQGKFEIMYDKHIQMKKKYLLLRKSLETCHVESIKKTTNNIQLKFTETLTNIWKQKRDYSQNYFHEILRIIENELKSEPCEGDYTFTKDYIIDLSLYLFQRASKDFKKMHAAFKTANDPVNYLERKKDDFFMSFKISCQGATSITSFVDFLWLKLTPAISVSIWKIMVQKIAGDMRATCPEFNGNRANLEIHILYSLAEEEKFDKYWKYIQKPEEFFRDYIRDHIKRYCSEKESEKIKTFLNISLGDIKNTILSAIHNSTKVAKAKGSTASHWLDLFCDHLGSNLVFPRKDLVSIEHQELMDTEFLKEAMSKALDPAMREVEEDCSSKHIDEIVPDIEKILSEHLCGCWKQCPFCKAICTNTIPQHEGDHSVPFHRPQAVSGWHWHKTDQFHINVCTSSVASNISFILDGFREFPFKKYREAGGDYATWSITPDSSTQPYWKWFVCHFRSNLEENYGKKFTGKGSLPDLWTKITKQEVLNDLKK</sequence>
<keyword id="KW-0963">Cytoplasm</keyword>
<keyword id="KW-0342">GTP-binding</keyword>
<keyword id="KW-0547">Nucleotide-binding</keyword>
<keyword id="KW-0539">Nucleus</keyword>
<keyword id="KW-1185">Reference proteome</keyword>
<proteinExistence type="evidence at protein level"/>
<gene>
    <name type="primary">Gvin1</name>
</gene>
<name>GVIN1_MOUSE</name>
<protein>
    <recommendedName>
        <fullName>Interferon-induced very large GTPase 1</fullName>
    </recommendedName>
    <alternativeName>
        <fullName>Very large-inducible GTPase-1</fullName>
        <shortName>VLIG-1</shortName>
    </alternativeName>
</protein>
<accession>Q80SU7</accession>
<accession>Q3U3F2</accession>
<accession>Q8BL18</accession>
<accession>Q8CBA9</accession>
<reference key="1">
    <citation type="journal article" date="2003" name="J. Immunol.">
        <title>A giant GTPase, very large inducible GTPase-1, is inducible by IFNs.</title>
        <authorList>
            <person name="Klamp T."/>
            <person name="Boehm U."/>
            <person name="Schenk D."/>
            <person name="Pfeffer K."/>
            <person name="Howard J.C."/>
        </authorList>
    </citation>
    <scope>NUCLEOTIDE SEQUENCE [MRNA]</scope>
    <scope>SUBCELLULAR LOCATION</scope>
    <scope>TISSUE SPECIFICITY</scope>
    <scope>GTP-BINDING</scope>
    <scope>INDUCTION</scope>
    <source>
        <strain>C57BL/6J</strain>
    </source>
</reference>
<reference key="2">
    <citation type="journal article" date="2005" name="Science">
        <title>The transcriptional landscape of the mammalian genome.</title>
        <authorList>
            <person name="Carninci P."/>
            <person name="Kasukawa T."/>
            <person name="Katayama S."/>
            <person name="Gough J."/>
            <person name="Frith M.C."/>
            <person name="Maeda N."/>
            <person name="Oyama R."/>
            <person name="Ravasi T."/>
            <person name="Lenhard B."/>
            <person name="Wells C."/>
            <person name="Kodzius R."/>
            <person name="Shimokawa K."/>
            <person name="Bajic V.B."/>
            <person name="Brenner S.E."/>
            <person name="Batalov S."/>
            <person name="Forrest A.R."/>
            <person name="Zavolan M."/>
            <person name="Davis M.J."/>
            <person name="Wilming L.G."/>
            <person name="Aidinis V."/>
            <person name="Allen J.E."/>
            <person name="Ambesi-Impiombato A."/>
            <person name="Apweiler R."/>
            <person name="Aturaliya R.N."/>
            <person name="Bailey T.L."/>
            <person name="Bansal M."/>
            <person name="Baxter L."/>
            <person name="Beisel K.W."/>
            <person name="Bersano T."/>
            <person name="Bono H."/>
            <person name="Chalk A.M."/>
            <person name="Chiu K.P."/>
            <person name="Choudhary V."/>
            <person name="Christoffels A."/>
            <person name="Clutterbuck D.R."/>
            <person name="Crowe M.L."/>
            <person name="Dalla E."/>
            <person name="Dalrymple B.P."/>
            <person name="de Bono B."/>
            <person name="Della Gatta G."/>
            <person name="di Bernardo D."/>
            <person name="Down T."/>
            <person name="Engstrom P."/>
            <person name="Fagiolini M."/>
            <person name="Faulkner G."/>
            <person name="Fletcher C.F."/>
            <person name="Fukushima T."/>
            <person name="Furuno M."/>
            <person name="Futaki S."/>
            <person name="Gariboldi M."/>
            <person name="Georgii-Hemming P."/>
            <person name="Gingeras T.R."/>
            <person name="Gojobori T."/>
            <person name="Green R.E."/>
            <person name="Gustincich S."/>
            <person name="Harbers M."/>
            <person name="Hayashi Y."/>
            <person name="Hensch T.K."/>
            <person name="Hirokawa N."/>
            <person name="Hill D."/>
            <person name="Huminiecki L."/>
            <person name="Iacono M."/>
            <person name="Ikeo K."/>
            <person name="Iwama A."/>
            <person name="Ishikawa T."/>
            <person name="Jakt M."/>
            <person name="Kanapin A."/>
            <person name="Katoh M."/>
            <person name="Kawasawa Y."/>
            <person name="Kelso J."/>
            <person name="Kitamura H."/>
            <person name="Kitano H."/>
            <person name="Kollias G."/>
            <person name="Krishnan S.P."/>
            <person name="Kruger A."/>
            <person name="Kummerfeld S.K."/>
            <person name="Kurochkin I.V."/>
            <person name="Lareau L.F."/>
            <person name="Lazarevic D."/>
            <person name="Lipovich L."/>
            <person name="Liu J."/>
            <person name="Liuni S."/>
            <person name="McWilliam S."/>
            <person name="Madan Babu M."/>
            <person name="Madera M."/>
            <person name="Marchionni L."/>
            <person name="Matsuda H."/>
            <person name="Matsuzawa S."/>
            <person name="Miki H."/>
            <person name="Mignone F."/>
            <person name="Miyake S."/>
            <person name="Morris K."/>
            <person name="Mottagui-Tabar S."/>
            <person name="Mulder N."/>
            <person name="Nakano N."/>
            <person name="Nakauchi H."/>
            <person name="Ng P."/>
            <person name="Nilsson R."/>
            <person name="Nishiguchi S."/>
            <person name="Nishikawa S."/>
            <person name="Nori F."/>
            <person name="Ohara O."/>
            <person name="Okazaki Y."/>
            <person name="Orlando V."/>
            <person name="Pang K.C."/>
            <person name="Pavan W.J."/>
            <person name="Pavesi G."/>
            <person name="Pesole G."/>
            <person name="Petrovsky N."/>
            <person name="Piazza S."/>
            <person name="Reed J."/>
            <person name="Reid J.F."/>
            <person name="Ring B.Z."/>
            <person name="Ringwald M."/>
            <person name="Rost B."/>
            <person name="Ruan Y."/>
            <person name="Salzberg S.L."/>
            <person name="Sandelin A."/>
            <person name="Schneider C."/>
            <person name="Schoenbach C."/>
            <person name="Sekiguchi K."/>
            <person name="Semple C.A."/>
            <person name="Seno S."/>
            <person name="Sessa L."/>
            <person name="Sheng Y."/>
            <person name="Shibata Y."/>
            <person name="Shimada H."/>
            <person name="Shimada K."/>
            <person name="Silva D."/>
            <person name="Sinclair B."/>
            <person name="Sperling S."/>
            <person name="Stupka E."/>
            <person name="Sugiura K."/>
            <person name="Sultana R."/>
            <person name="Takenaka Y."/>
            <person name="Taki K."/>
            <person name="Tammoja K."/>
            <person name="Tan S.L."/>
            <person name="Tang S."/>
            <person name="Taylor M.S."/>
            <person name="Tegner J."/>
            <person name="Teichmann S.A."/>
            <person name="Ueda H.R."/>
            <person name="van Nimwegen E."/>
            <person name="Verardo R."/>
            <person name="Wei C.L."/>
            <person name="Yagi K."/>
            <person name="Yamanishi H."/>
            <person name="Zabarovsky E."/>
            <person name="Zhu S."/>
            <person name="Zimmer A."/>
            <person name="Hide W."/>
            <person name="Bult C."/>
            <person name="Grimmond S.M."/>
            <person name="Teasdale R.D."/>
            <person name="Liu E.T."/>
            <person name="Brusic V."/>
            <person name="Quackenbush J."/>
            <person name="Wahlestedt C."/>
            <person name="Mattick J.S."/>
            <person name="Hume D.A."/>
            <person name="Kai C."/>
            <person name="Sasaki D."/>
            <person name="Tomaru Y."/>
            <person name="Fukuda S."/>
            <person name="Kanamori-Katayama M."/>
            <person name="Suzuki M."/>
            <person name="Aoki J."/>
            <person name="Arakawa T."/>
            <person name="Iida J."/>
            <person name="Imamura K."/>
            <person name="Itoh M."/>
            <person name="Kato T."/>
            <person name="Kawaji H."/>
            <person name="Kawagashira N."/>
            <person name="Kawashima T."/>
            <person name="Kojima M."/>
            <person name="Kondo S."/>
            <person name="Konno H."/>
            <person name="Nakano K."/>
            <person name="Ninomiya N."/>
            <person name="Nishio T."/>
            <person name="Okada M."/>
            <person name="Plessy C."/>
            <person name="Shibata K."/>
            <person name="Shiraki T."/>
            <person name="Suzuki S."/>
            <person name="Tagami M."/>
            <person name="Waki K."/>
            <person name="Watahiki A."/>
            <person name="Okamura-Oho Y."/>
            <person name="Suzuki H."/>
            <person name="Kawai J."/>
            <person name="Hayashizaki Y."/>
        </authorList>
    </citation>
    <scope>NUCLEOTIDE SEQUENCE [LARGE SCALE MRNA]</scope>
    <source>
        <strain>C57BL/6J</strain>
        <strain>NOD</strain>
        <tissue>Adipose tissue</tissue>
        <tissue>Bone</tissue>
    </source>
</reference>
<reference key="3">
    <citation type="journal article" date="2010" name="Cell">
        <title>A tissue-specific atlas of mouse protein phosphorylation and expression.</title>
        <authorList>
            <person name="Huttlin E.L."/>
            <person name="Jedrychowski M.P."/>
            <person name="Elias J.E."/>
            <person name="Goswami T."/>
            <person name="Rad R."/>
            <person name="Beausoleil S.A."/>
            <person name="Villen J."/>
            <person name="Haas W."/>
            <person name="Sowa M.E."/>
            <person name="Gygi S.P."/>
        </authorList>
    </citation>
    <scope>IDENTIFICATION BY MASS SPECTROMETRY [LARGE SCALE ANALYSIS]</scope>
    <source>
        <tissue>Brown adipose tissue</tissue>
        <tissue>Heart</tissue>
        <tissue>Kidney</tissue>
        <tissue>Liver</tissue>
        <tissue>Lung</tissue>
        <tissue>Pancreas</tissue>
        <tissue>Spleen</tissue>
        <tissue>Testis</tissue>
    </source>
</reference>
<comment type="subcellular location">
    <subcellularLocation>
        <location evidence="3">Cytoplasm</location>
        <location evidence="3">Cytosol</location>
    </subcellularLocation>
    <subcellularLocation>
        <location evidence="3">Nucleus</location>
    </subcellularLocation>
</comment>
<comment type="tissue specificity">
    <text evidence="3">Widely expressed. Expressed at low basal level in lung, heart, thymus and spleen; at still lower level in liver, ovary, kidney and brain. Expressed at very weak level in testis. Undetectable in embryo.</text>
</comment>
<comment type="induction">
    <text evidence="3">By interferons. Induced both in response to IFN type I (IFN-alpha and -beta) and IFN type II (IFN-gamma).</text>
</comment>
<comment type="similarity">
    <text evidence="4">Belongs to the TRAFAC class dynamin-like GTPase superfamily. Very large inducible GTPase (VLIG) family.</text>
</comment>
<comment type="sequence caution" evidence="4">
    <conflict type="erroneous initiation">
        <sequence resource="EMBL-CDS" id="BAC32832"/>
    </conflict>
</comment>
<dbReference type="EMBL" id="AY167972">
    <property type="protein sequence ID" value="AAO63456.1"/>
    <property type="molecule type" value="mRNA"/>
</dbReference>
<dbReference type="EMBL" id="AY167973">
    <property type="protein sequence ID" value="AAO59423.1"/>
    <property type="molecule type" value="mRNA"/>
</dbReference>
<dbReference type="EMBL" id="AY167974">
    <property type="protein sequence ID" value="AAO59424.1"/>
    <property type="molecule type" value="mRNA"/>
</dbReference>
<dbReference type="EMBL" id="AK036418">
    <property type="protein sequence ID" value="BAC29422.1"/>
    <property type="molecule type" value="mRNA"/>
</dbReference>
<dbReference type="EMBL" id="AK046674">
    <property type="protein sequence ID" value="BAC32832.1"/>
    <property type="status" value="ALT_INIT"/>
    <property type="molecule type" value="mRNA"/>
</dbReference>
<dbReference type="EMBL" id="AK154796">
    <property type="protein sequence ID" value="BAE32834.1"/>
    <property type="molecule type" value="mRNA"/>
</dbReference>
<dbReference type="CCDS" id="CCDS21663.1"/>
<dbReference type="CCDS" id="CCDS57577.1"/>
<dbReference type="BioGRID" id="786086">
    <property type="interactions" value="4"/>
</dbReference>
<dbReference type="FunCoup" id="Q80SU7">
    <property type="interactions" value="148"/>
</dbReference>
<dbReference type="IntAct" id="Q80SU7">
    <property type="interactions" value="3"/>
</dbReference>
<dbReference type="STRING" id="10090.ENSMUSP00000135898"/>
<dbReference type="GlyGen" id="Q80SU7">
    <property type="glycosylation" value="1 site, 1 O-linked glycan (1 site)"/>
</dbReference>
<dbReference type="iPTMnet" id="Q80SU7"/>
<dbReference type="PhosphoSitePlus" id="Q80SU7"/>
<dbReference type="PaxDb" id="10090-ENSMUSP00000102377"/>
<dbReference type="ProteomicsDB" id="271369"/>
<dbReference type="Ensembl" id="ENSMUST00000106766.9">
    <property type="protein sequence ID" value="ENSMUSP00000102377.3"/>
    <property type="gene ID" value="ENSMUSG00000078606.9"/>
</dbReference>
<dbReference type="Ensembl" id="ENSMUST00000176467.8">
    <property type="protein sequence ID" value="ENSMUSP00000135898.2"/>
    <property type="gene ID" value="ENSMUSG00000078606.9"/>
</dbReference>
<dbReference type="KEGG" id="mmu:100042856"/>
<dbReference type="UCSC" id="uc033jbi.1">
    <property type="organism name" value="mouse"/>
</dbReference>
<dbReference type="AGR" id="MGI:1921808"/>
<dbReference type="CTD" id="100042856"/>
<dbReference type="MGI" id="MGI:1921808">
    <property type="gene designation" value="Gvin1"/>
</dbReference>
<dbReference type="VEuPathDB" id="HostDB:ENSMUSG00000078606"/>
<dbReference type="eggNOG" id="ENOG502QVVR">
    <property type="taxonomic scope" value="Eukaryota"/>
</dbReference>
<dbReference type="GeneTree" id="ENSGT00940000154393"/>
<dbReference type="HOGENOM" id="CLU_001775_0_0_1"/>
<dbReference type="InParanoid" id="Q80SU7"/>
<dbReference type="OMA" id="QKMSTAD"/>
<dbReference type="OrthoDB" id="44381at9989"/>
<dbReference type="PhylomeDB" id="Q80SU7"/>
<dbReference type="TreeFam" id="TF343170"/>
<dbReference type="BioGRID-ORCS" id="100042856">
    <property type="hits" value="0 hits in 35 CRISPR screens"/>
</dbReference>
<dbReference type="ChiTaRS" id="Gvin1">
    <property type="organism name" value="mouse"/>
</dbReference>
<dbReference type="PRO" id="PR:Q80SU7"/>
<dbReference type="Proteomes" id="UP000000589">
    <property type="component" value="Chromosome 7"/>
</dbReference>
<dbReference type="RNAct" id="Q80SU7">
    <property type="molecule type" value="protein"/>
</dbReference>
<dbReference type="Bgee" id="ENSMUSG00000078606">
    <property type="expression patterns" value="Expressed in spleen and 50 other cell types or tissues"/>
</dbReference>
<dbReference type="ExpressionAtlas" id="Q80SU7">
    <property type="expression patterns" value="baseline and differential"/>
</dbReference>
<dbReference type="GO" id="GO:0005829">
    <property type="term" value="C:cytosol"/>
    <property type="evidence" value="ECO:0007669"/>
    <property type="project" value="UniProtKB-SubCell"/>
</dbReference>
<dbReference type="GO" id="GO:0005634">
    <property type="term" value="C:nucleus"/>
    <property type="evidence" value="ECO:0007669"/>
    <property type="project" value="UniProtKB-SubCell"/>
</dbReference>
<dbReference type="GO" id="GO:0005525">
    <property type="term" value="F:GTP binding"/>
    <property type="evidence" value="ECO:0007669"/>
    <property type="project" value="UniProtKB-KW"/>
</dbReference>
<dbReference type="Gene3D" id="3.40.50.300">
    <property type="entry name" value="P-loop containing nucleotide triphosphate hydrolases"/>
    <property type="match status" value="1"/>
</dbReference>
<dbReference type="InterPro" id="IPR029028">
    <property type="entry name" value="Alpha/beta_knot_MTases"/>
</dbReference>
<dbReference type="InterPro" id="IPR030383">
    <property type="entry name" value="G_VLIG_dom"/>
</dbReference>
<dbReference type="InterPro" id="IPR027417">
    <property type="entry name" value="P-loop_NTPase"/>
</dbReference>
<dbReference type="PANTHER" id="PTHR22796:SF6">
    <property type="entry name" value="INTERFERON-INDUCED VERY LARGE GTPASE 1-RELATED"/>
    <property type="match status" value="1"/>
</dbReference>
<dbReference type="PANTHER" id="PTHR22796">
    <property type="entry name" value="URG4-RELATED"/>
    <property type="match status" value="1"/>
</dbReference>
<dbReference type="Pfam" id="PF25496">
    <property type="entry name" value="URGCP"/>
    <property type="match status" value="1"/>
</dbReference>
<dbReference type="SUPFAM" id="SSF75217">
    <property type="entry name" value="alpha/beta knot"/>
    <property type="match status" value="1"/>
</dbReference>
<dbReference type="SUPFAM" id="SSF52540">
    <property type="entry name" value="P-loop containing nucleoside triphosphate hydrolases"/>
    <property type="match status" value="1"/>
</dbReference>
<dbReference type="PROSITE" id="PS51717">
    <property type="entry name" value="G_VLIG"/>
    <property type="match status" value="1"/>
</dbReference>